<keyword id="KW-0963">Cytoplasm</keyword>
<keyword id="KW-0251">Elongation factor</keyword>
<keyword id="KW-0342">GTP-binding</keyword>
<keyword id="KW-0547">Nucleotide-binding</keyword>
<keyword id="KW-0648">Protein biosynthesis</keyword>
<sequence length="712" mass="78840">MARQTPITRYRNIGISAHIDAGKTTTTERILFYTGVSHKIGEVHDGAATMDWMEQEQERGITITSAATTCFWSGMGNQFPQHRINVIDTPGHVDFTIEVERSMRVLDGACMVYCAVGGVQPQSETVWRQANKYKVPRLAFVNKMDRTGANFFRVVEQMKTRLGANPVPIVVPIGAEDTFTGVVDLIEMKAIIWDEASQGMKFEYGEIPADLVDTAQEWRTNMVEAAAEASEELMDKYLEEGDLSKEDIIAGLRARTLASEIQVMLCGSAFKNKGVQRMLDAVIEFLPSPTEVKAIEGILDDKDETKASREASDEAPFSALAFKIMNDKFVGNLTFVRVYSGVLKQGDAVYNPVKSKRERIGRIVQMHANERQDIDEIRAGDIAACVGLKDVTTGDTLCDEKNIITLERMEFPDPVIQLAVEPKTKADQEKMSIALGRLAKEDPSFRVHTDEESGQTIIAGMGELHLDIIVDRMKREFGVEANIGKPMVAYRETIKKTVEQEGKFVRQTGGKGKFGHVYVRLEPLDVEAAGKEYEFAEEVVGGVVPKEFFGAVDKGIQERMKNGVLAGYPVVGVKAVLFDGSYHDVDSDELSFKMAGSYAFRDGFMKADPVLLEPIMKVEVETPEDYMGDIMGDLNRRRGMVQGMDDLPGGTKAIKAEVPLAEMFGYATQMRSMSQGRATYSMEFAKYAETPRNVAEGIIAKFQAGGKKGDDE</sequence>
<gene>
    <name evidence="1" type="primary">fusA</name>
    <name type="ordered locus">AB57_0913</name>
</gene>
<accession>B7I7S1</accession>
<dbReference type="EMBL" id="CP001182">
    <property type="protein sequence ID" value="ACJ40705.1"/>
    <property type="molecule type" value="Genomic_DNA"/>
</dbReference>
<dbReference type="RefSeq" id="WP_000113824.1">
    <property type="nucleotide sequence ID" value="NC_011586.2"/>
</dbReference>
<dbReference type="SMR" id="B7I7S1"/>
<dbReference type="GeneID" id="92892797"/>
<dbReference type="KEGG" id="abn:AB57_06485"/>
<dbReference type="HOGENOM" id="CLU_002794_4_1_6"/>
<dbReference type="Proteomes" id="UP000007094">
    <property type="component" value="Chromosome"/>
</dbReference>
<dbReference type="GO" id="GO:0005737">
    <property type="term" value="C:cytoplasm"/>
    <property type="evidence" value="ECO:0007669"/>
    <property type="project" value="UniProtKB-SubCell"/>
</dbReference>
<dbReference type="GO" id="GO:0005525">
    <property type="term" value="F:GTP binding"/>
    <property type="evidence" value="ECO:0007669"/>
    <property type="project" value="UniProtKB-UniRule"/>
</dbReference>
<dbReference type="GO" id="GO:0003924">
    <property type="term" value="F:GTPase activity"/>
    <property type="evidence" value="ECO:0007669"/>
    <property type="project" value="InterPro"/>
</dbReference>
<dbReference type="GO" id="GO:0097216">
    <property type="term" value="F:guanosine tetraphosphate binding"/>
    <property type="evidence" value="ECO:0007669"/>
    <property type="project" value="UniProtKB-ARBA"/>
</dbReference>
<dbReference type="GO" id="GO:0003746">
    <property type="term" value="F:translation elongation factor activity"/>
    <property type="evidence" value="ECO:0007669"/>
    <property type="project" value="UniProtKB-UniRule"/>
</dbReference>
<dbReference type="GO" id="GO:0032790">
    <property type="term" value="P:ribosome disassembly"/>
    <property type="evidence" value="ECO:0007669"/>
    <property type="project" value="TreeGrafter"/>
</dbReference>
<dbReference type="CDD" id="cd01886">
    <property type="entry name" value="EF-G"/>
    <property type="match status" value="1"/>
</dbReference>
<dbReference type="CDD" id="cd16262">
    <property type="entry name" value="EFG_III"/>
    <property type="match status" value="1"/>
</dbReference>
<dbReference type="CDD" id="cd01434">
    <property type="entry name" value="EFG_mtEFG1_IV"/>
    <property type="match status" value="1"/>
</dbReference>
<dbReference type="CDD" id="cd03713">
    <property type="entry name" value="EFG_mtEFG_C"/>
    <property type="match status" value="1"/>
</dbReference>
<dbReference type="CDD" id="cd04088">
    <property type="entry name" value="EFG_mtEFG_II"/>
    <property type="match status" value="1"/>
</dbReference>
<dbReference type="FunFam" id="2.40.30.10:FF:000006">
    <property type="entry name" value="Elongation factor G"/>
    <property type="match status" value="1"/>
</dbReference>
<dbReference type="FunFam" id="3.30.230.10:FF:000003">
    <property type="entry name" value="Elongation factor G"/>
    <property type="match status" value="1"/>
</dbReference>
<dbReference type="FunFam" id="3.30.70.240:FF:000001">
    <property type="entry name" value="Elongation factor G"/>
    <property type="match status" value="1"/>
</dbReference>
<dbReference type="FunFam" id="3.30.70.870:FF:000001">
    <property type="entry name" value="Elongation factor G"/>
    <property type="match status" value="1"/>
</dbReference>
<dbReference type="FunFam" id="3.40.50.300:FF:000029">
    <property type="entry name" value="Elongation factor G"/>
    <property type="match status" value="1"/>
</dbReference>
<dbReference type="Gene3D" id="3.30.230.10">
    <property type="match status" value="1"/>
</dbReference>
<dbReference type="Gene3D" id="3.30.70.240">
    <property type="match status" value="1"/>
</dbReference>
<dbReference type="Gene3D" id="3.30.70.870">
    <property type="entry name" value="Elongation Factor G (Translational Gtpase), domain 3"/>
    <property type="match status" value="1"/>
</dbReference>
<dbReference type="Gene3D" id="3.40.50.300">
    <property type="entry name" value="P-loop containing nucleotide triphosphate hydrolases"/>
    <property type="match status" value="1"/>
</dbReference>
<dbReference type="Gene3D" id="2.40.30.10">
    <property type="entry name" value="Translation factors"/>
    <property type="match status" value="1"/>
</dbReference>
<dbReference type="HAMAP" id="MF_00054_B">
    <property type="entry name" value="EF_G_EF_2_B"/>
    <property type="match status" value="1"/>
</dbReference>
<dbReference type="InterPro" id="IPR041095">
    <property type="entry name" value="EFG_II"/>
</dbReference>
<dbReference type="InterPro" id="IPR009022">
    <property type="entry name" value="EFG_III"/>
</dbReference>
<dbReference type="InterPro" id="IPR035647">
    <property type="entry name" value="EFG_III/V"/>
</dbReference>
<dbReference type="InterPro" id="IPR047872">
    <property type="entry name" value="EFG_IV"/>
</dbReference>
<dbReference type="InterPro" id="IPR035649">
    <property type="entry name" value="EFG_V"/>
</dbReference>
<dbReference type="InterPro" id="IPR000640">
    <property type="entry name" value="EFG_V-like"/>
</dbReference>
<dbReference type="InterPro" id="IPR004161">
    <property type="entry name" value="EFTu-like_2"/>
</dbReference>
<dbReference type="InterPro" id="IPR031157">
    <property type="entry name" value="G_TR_CS"/>
</dbReference>
<dbReference type="InterPro" id="IPR027417">
    <property type="entry name" value="P-loop_NTPase"/>
</dbReference>
<dbReference type="InterPro" id="IPR020568">
    <property type="entry name" value="Ribosomal_Su5_D2-typ_SF"/>
</dbReference>
<dbReference type="InterPro" id="IPR014721">
    <property type="entry name" value="Ribsml_uS5_D2-typ_fold_subgr"/>
</dbReference>
<dbReference type="InterPro" id="IPR005225">
    <property type="entry name" value="Small_GTP-bd"/>
</dbReference>
<dbReference type="InterPro" id="IPR000795">
    <property type="entry name" value="T_Tr_GTP-bd_dom"/>
</dbReference>
<dbReference type="InterPro" id="IPR009000">
    <property type="entry name" value="Transl_B-barrel_sf"/>
</dbReference>
<dbReference type="InterPro" id="IPR004540">
    <property type="entry name" value="Transl_elong_EFG/EF2"/>
</dbReference>
<dbReference type="InterPro" id="IPR005517">
    <property type="entry name" value="Transl_elong_EFG/EF2_IV"/>
</dbReference>
<dbReference type="NCBIfam" id="TIGR00484">
    <property type="entry name" value="EF-G"/>
    <property type="match status" value="1"/>
</dbReference>
<dbReference type="NCBIfam" id="NF009381">
    <property type="entry name" value="PRK12740.1-5"/>
    <property type="match status" value="1"/>
</dbReference>
<dbReference type="NCBIfam" id="TIGR00231">
    <property type="entry name" value="small_GTP"/>
    <property type="match status" value="1"/>
</dbReference>
<dbReference type="PANTHER" id="PTHR43261:SF1">
    <property type="entry name" value="RIBOSOME-RELEASING FACTOR 2, MITOCHONDRIAL"/>
    <property type="match status" value="1"/>
</dbReference>
<dbReference type="PANTHER" id="PTHR43261">
    <property type="entry name" value="TRANSLATION ELONGATION FACTOR G-RELATED"/>
    <property type="match status" value="1"/>
</dbReference>
<dbReference type="Pfam" id="PF00679">
    <property type="entry name" value="EFG_C"/>
    <property type="match status" value="1"/>
</dbReference>
<dbReference type="Pfam" id="PF14492">
    <property type="entry name" value="EFG_III"/>
    <property type="match status" value="1"/>
</dbReference>
<dbReference type="Pfam" id="PF03764">
    <property type="entry name" value="EFG_IV"/>
    <property type="match status" value="1"/>
</dbReference>
<dbReference type="Pfam" id="PF00009">
    <property type="entry name" value="GTP_EFTU"/>
    <property type="match status" value="1"/>
</dbReference>
<dbReference type="Pfam" id="PF03144">
    <property type="entry name" value="GTP_EFTU_D2"/>
    <property type="match status" value="1"/>
</dbReference>
<dbReference type="PRINTS" id="PR00315">
    <property type="entry name" value="ELONGATNFCT"/>
</dbReference>
<dbReference type="SMART" id="SM00838">
    <property type="entry name" value="EFG_C"/>
    <property type="match status" value="1"/>
</dbReference>
<dbReference type="SMART" id="SM00889">
    <property type="entry name" value="EFG_IV"/>
    <property type="match status" value="1"/>
</dbReference>
<dbReference type="SUPFAM" id="SSF54980">
    <property type="entry name" value="EF-G C-terminal domain-like"/>
    <property type="match status" value="2"/>
</dbReference>
<dbReference type="SUPFAM" id="SSF52540">
    <property type="entry name" value="P-loop containing nucleoside triphosphate hydrolases"/>
    <property type="match status" value="1"/>
</dbReference>
<dbReference type="SUPFAM" id="SSF54211">
    <property type="entry name" value="Ribosomal protein S5 domain 2-like"/>
    <property type="match status" value="1"/>
</dbReference>
<dbReference type="SUPFAM" id="SSF50447">
    <property type="entry name" value="Translation proteins"/>
    <property type="match status" value="1"/>
</dbReference>
<dbReference type="PROSITE" id="PS00301">
    <property type="entry name" value="G_TR_1"/>
    <property type="match status" value="1"/>
</dbReference>
<dbReference type="PROSITE" id="PS51722">
    <property type="entry name" value="G_TR_2"/>
    <property type="match status" value="1"/>
</dbReference>
<name>EFG_ACIB5</name>
<protein>
    <recommendedName>
        <fullName evidence="1">Elongation factor G</fullName>
        <shortName evidence="1">EF-G</shortName>
    </recommendedName>
</protein>
<comment type="function">
    <text evidence="1">Catalyzes the GTP-dependent ribosomal translocation step during translation elongation. During this step, the ribosome changes from the pre-translocational (PRE) to the post-translocational (POST) state as the newly formed A-site-bound peptidyl-tRNA and P-site-bound deacylated tRNA move to the P and E sites, respectively. Catalyzes the coordinated movement of the two tRNA molecules, the mRNA and conformational changes in the ribosome.</text>
</comment>
<comment type="subcellular location">
    <subcellularLocation>
        <location evidence="1">Cytoplasm</location>
    </subcellularLocation>
</comment>
<comment type="similarity">
    <text evidence="1">Belongs to the TRAFAC class translation factor GTPase superfamily. Classic translation factor GTPase family. EF-G/EF-2 subfamily.</text>
</comment>
<evidence type="ECO:0000255" key="1">
    <source>
        <dbReference type="HAMAP-Rule" id="MF_00054"/>
    </source>
</evidence>
<proteinExistence type="inferred from homology"/>
<reference key="1">
    <citation type="journal article" date="2008" name="J. Bacteriol.">
        <title>Comparative genome sequence analysis of multidrug-resistant Acinetobacter baumannii.</title>
        <authorList>
            <person name="Adams M.D."/>
            <person name="Goglin K."/>
            <person name="Molyneaux N."/>
            <person name="Hujer K.M."/>
            <person name="Lavender H."/>
            <person name="Jamison J.J."/>
            <person name="MacDonald I.J."/>
            <person name="Martin K.M."/>
            <person name="Russo T."/>
            <person name="Campagnari A.A."/>
            <person name="Hujer A.M."/>
            <person name="Bonomo R.A."/>
            <person name="Gill S.R."/>
        </authorList>
    </citation>
    <scope>NUCLEOTIDE SEQUENCE [LARGE SCALE GENOMIC DNA]</scope>
    <source>
        <strain>AB0057</strain>
    </source>
</reference>
<organism>
    <name type="scientific">Acinetobacter baumannii (strain AB0057)</name>
    <dbReference type="NCBI Taxonomy" id="480119"/>
    <lineage>
        <taxon>Bacteria</taxon>
        <taxon>Pseudomonadati</taxon>
        <taxon>Pseudomonadota</taxon>
        <taxon>Gammaproteobacteria</taxon>
        <taxon>Moraxellales</taxon>
        <taxon>Moraxellaceae</taxon>
        <taxon>Acinetobacter</taxon>
        <taxon>Acinetobacter calcoaceticus/baumannii complex</taxon>
    </lineage>
</organism>
<feature type="chain" id="PRO_1000201424" description="Elongation factor G">
    <location>
        <begin position="1"/>
        <end position="712"/>
    </location>
</feature>
<feature type="domain" description="tr-type G">
    <location>
        <begin position="8"/>
        <end position="290"/>
    </location>
</feature>
<feature type="binding site" evidence="1">
    <location>
        <begin position="17"/>
        <end position="24"/>
    </location>
    <ligand>
        <name>GTP</name>
        <dbReference type="ChEBI" id="CHEBI:37565"/>
    </ligand>
</feature>
<feature type="binding site" evidence="1">
    <location>
        <begin position="88"/>
        <end position="92"/>
    </location>
    <ligand>
        <name>GTP</name>
        <dbReference type="ChEBI" id="CHEBI:37565"/>
    </ligand>
</feature>
<feature type="binding site" evidence="1">
    <location>
        <begin position="142"/>
        <end position="145"/>
    </location>
    <ligand>
        <name>GTP</name>
        <dbReference type="ChEBI" id="CHEBI:37565"/>
    </ligand>
</feature>